<accession>A7HDY3</accession>
<reference key="1">
    <citation type="journal article" date="2015" name="Genome Announc.">
        <title>Complete genome sequence of Anaeromyxobacter sp. Fw109-5, an anaerobic, metal-reducing bacterium isolated from a contaminated subsurface environment.</title>
        <authorList>
            <person name="Hwang C."/>
            <person name="Copeland A."/>
            <person name="Lucas S."/>
            <person name="Lapidus A."/>
            <person name="Barry K."/>
            <person name="Glavina Del Rio T."/>
            <person name="Dalin E."/>
            <person name="Tice H."/>
            <person name="Pitluck S."/>
            <person name="Sims D."/>
            <person name="Brettin T."/>
            <person name="Bruce D.C."/>
            <person name="Detter J.C."/>
            <person name="Han C.S."/>
            <person name="Schmutz J."/>
            <person name="Larimer F.W."/>
            <person name="Land M.L."/>
            <person name="Hauser L.J."/>
            <person name="Kyrpides N."/>
            <person name="Lykidis A."/>
            <person name="Richardson P."/>
            <person name="Belieav A."/>
            <person name="Sanford R.A."/>
            <person name="Loeffler F.E."/>
            <person name="Fields M.W."/>
        </authorList>
    </citation>
    <scope>NUCLEOTIDE SEQUENCE [LARGE SCALE GENOMIC DNA]</scope>
    <source>
        <strain>Fw109-5</strain>
    </source>
</reference>
<organism>
    <name type="scientific">Anaeromyxobacter sp. (strain Fw109-5)</name>
    <dbReference type="NCBI Taxonomy" id="404589"/>
    <lineage>
        <taxon>Bacteria</taxon>
        <taxon>Pseudomonadati</taxon>
        <taxon>Myxococcota</taxon>
        <taxon>Myxococcia</taxon>
        <taxon>Myxococcales</taxon>
        <taxon>Cystobacterineae</taxon>
        <taxon>Anaeromyxobacteraceae</taxon>
        <taxon>Anaeromyxobacter</taxon>
    </lineage>
</organism>
<sequence>MNVYEGSLVATGLKVGLVVARFNSLVTEQLLVGAADALRRHGVKDGDIDVFRCPGTFELPALLRRVARSARYDAVVALGAVIRGGTPHFEYVAGEATKGVAQIALESDCAVSMGILTCDTLEQALERAGVKAGNKGAEAAVAAVEQANVLREAAKVPSPRRAE</sequence>
<dbReference type="EC" id="2.5.1.78" evidence="1"/>
<dbReference type="EMBL" id="CP000769">
    <property type="protein sequence ID" value="ABS26929.1"/>
    <property type="molecule type" value="Genomic_DNA"/>
</dbReference>
<dbReference type="RefSeq" id="WP_012097530.1">
    <property type="nucleotide sequence ID" value="NC_009675.1"/>
</dbReference>
<dbReference type="SMR" id="A7HDY3"/>
<dbReference type="STRING" id="404589.Anae109_2728"/>
<dbReference type="KEGG" id="afw:Anae109_2728"/>
<dbReference type="eggNOG" id="COG0054">
    <property type="taxonomic scope" value="Bacteria"/>
</dbReference>
<dbReference type="HOGENOM" id="CLU_089358_1_1_7"/>
<dbReference type="OrthoDB" id="9809709at2"/>
<dbReference type="UniPathway" id="UPA00275">
    <property type="reaction ID" value="UER00404"/>
</dbReference>
<dbReference type="Proteomes" id="UP000006382">
    <property type="component" value="Chromosome"/>
</dbReference>
<dbReference type="GO" id="GO:0005829">
    <property type="term" value="C:cytosol"/>
    <property type="evidence" value="ECO:0007669"/>
    <property type="project" value="TreeGrafter"/>
</dbReference>
<dbReference type="GO" id="GO:0009349">
    <property type="term" value="C:riboflavin synthase complex"/>
    <property type="evidence" value="ECO:0007669"/>
    <property type="project" value="InterPro"/>
</dbReference>
<dbReference type="GO" id="GO:0000906">
    <property type="term" value="F:6,7-dimethyl-8-ribityllumazine synthase activity"/>
    <property type="evidence" value="ECO:0007669"/>
    <property type="project" value="UniProtKB-UniRule"/>
</dbReference>
<dbReference type="GO" id="GO:0009231">
    <property type="term" value="P:riboflavin biosynthetic process"/>
    <property type="evidence" value="ECO:0007669"/>
    <property type="project" value="UniProtKB-UniRule"/>
</dbReference>
<dbReference type="CDD" id="cd09209">
    <property type="entry name" value="Lumazine_synthase-I"/>
    <property type="match status" value="1"/>
</dbReference>
<dbReference type="FunFam" id="3.40.50.960:FF:000001">
    <property type="entry name" value="6,7-dimethyl-8-ribityllumazine synthase"/>
    <property type="match status" value="1"/>
</dbReference>
<dbReference type="Gene3D" id="3.40.50.960">
    <property type="entry name" value="Lumazine/riboflavin synthase"/>
    <property type="match status" value="1"/>
</dbReference>
<dbReference type="HAMAP" id="MF_00178">
    <property type="entry name" value="Lumazine_synth"/>
    <property type="match status" value="1"/>
</dbReference>
<dbReference type="InterPro" id="IPR034964">
    <property type="entry name" value="LS"/>
</dbReference>
<dbReference type="InterPro" id="IPR002180">
    <property type="entry name" value="LS/RS"/>
</dbReference>
<dbReference type="InterPro" id="IPR036467">
    <property type="entry name" value="LS/RS_sf"/>
</dbReference>
<dbReference type="NCBIfam" id="TIGR00114">
    <property type="entry name" value="lumazine-synth"/>
    <property type="match status" value="1"/>
</dbReference>
<dbReference type="NCBIfam" id="NF000812">
    <property type="entry name" value="PRK00061.1-4"/>
    <property type="match status" value="1"/>
</dbReference>
<dbReference type="PANTHER" id="PTHR21058:SF0">
    <property type="entry name" value="6,7-DIMETHYL-8-RIBITYLLUMAZINE SYNTHASE"/>
    <property type="match status" value="1"/>
</dbReference>
<dbReference type="PANTHER" id="PTHR21058">
    <property type="entry name" value="6,7-DIMETHYL-8-RIBITYLLUMAZINE SYNTHASE DMRL SYNTHASE LUMAZINE SYNTHASE"/>
    <property type="match status" value="1"/>
</dbReference>
<dbReference type="Pfam" id="PF00885">
    <property type="entry name" value="DMRL_synthase"/>
    <property type="match status" value="1"/>
</dbReference>
<dbReference type="SUPFAM" id="SSF52121">
    <property type="entry name" value="Lumazine synthase"/>
    <property type="match status" value="1"/>
</dbReference>
<keyword id="KW-1185">Reference proteome</keyword>
<keyword id="KW-0686">Riboflavin biosynthesis</keyword>
<keyword id="KW-0808">Transferase</keyword>
<proteinExistence type="inferred from homology"/>
<evidence type="ECO:0000255" key="1">
    <source>
        <dbReference type="HAMAP-Rule" id="MF_00178"/>
    </source>
</evidence>
<name>RISB_ANADF</name>
<comment type="function">
    <text evidence="1">Catalyzes the formation of 6,7-dimethyl-8-ribityllumazine by condensation of 5-amino-6-(D-ribitylamino)uracil with 3,4-dihydroxy-2-butanone 4-phosphate. This is the penultimate step in the biosynthesis of riboflavin.</text>
</comment>
<comment type="catalytic activity">
    <reaction evidence="1">
        <text>(2S)-2-hydroxy-3-oxobutyl phosphate + 5-amino-6-(D-ribitylamino)uracil = 6,7-dimethyl-8-(1-D-ribityl)lumazine + phosphate + 2 H2O + H(+)</text>
        <dbReference type="Rhea" id="RHEA:26152"/>
        <dbReference type="ChEBI" id="CHEBI:15377"/>
        <dbReference type="ChEBI" id="CHEBI:15378"/>
        <dbReference type="ChEBI" id="CHEBI:15934"/>
        <dbReference type="ChEBI" id="CHEBI:43474"/>
        <dbReference type="ChEBI" id="CHEBI:58201"/>
        <dbReference type="ChEBI" id="CHEBI:58830"/>
        <dbReference type="EC" id="2.5.1.78"/>
    </reaction>
</comment>
<comment type="pathway">
    <text evidence="1">Cofactor biosynthesis; riboflavin biosynthesis; riboflavin from 2-hydroxy-3-oxobutyl phosphate and 5-amino-6-(D-ribitylamino)uracil: step 1/2.</text>
</comment>
<comment type="similarity">
    <text evidence="1">Belongs to the DMRL synthase family.</text>
</comment>
<protein>
    <recommendedName>
        <fullName evidence="1">6,7-dimethyl-8-ribityllumazine synthase</fullName>
        <shortName evidence="1">DMRL synthase</shortName>
        <shortName evidence="1">LS</shortName>
        <shortName evidence="1">Lumazine synthase</shortName>
        <ecNumber evidence="1">2.5.1.78</ecNumber>
    </recommendedName>
</protein>
<feature type="chain" id="PRO_1000040361" description="6,7-dimethyl-8-ribityllumazine synthase">
    <location>
        <begin position="1"/>
        <end position="163"/>
    </location>
</feature>
<feature type="active site" description="Proton donor" evidence="1">
    <location>
        <position position="88"/>
    </location>
</feature>
<feature type="binding site" evidence="1">
    <location>
        <position position="22"/>
    </location>
    <ligand>
        <name>5-amino-6-(D-ribitylamino)uracil</name>
        <dbReference type="ChEBI" id="CHEBI:15934"/>
    </ligand>
</feature>
<feature type="binding site" evidence="1">
    <location>
        <begin position="56"/>
        <end position="58"/>
    </location>
    <ligand>
        <name>5-amino-6-(D-ribitylamino)uracil</name>
        <dbReference type="ChEBI" id="CHEBI:15934"/>
    </ligand>
</feature>
<feature type="binding site" evidence="1">
    <location>
        <begin position="80"/>
        <end position="82"/>
    </location>
    <ligand>
        <name>5-amino-6-(D-ribitylamino)uracil</name>
        <dbReference type="ChEBI" id="CHEBI:15934"/>
    </ligand>
</feature>
<feature type="binding site" evidence="1">
    <location>
        <begin position="85"/>
        <end position="86"/>
    </location>
    <ligand>
        <name>(2S)-2-hydroxy-3-oxobutyl phosphate</name>
        <dbReference type="ChEBI" id="CHEBI:58830"/>
    </ligand>
</feature>
<feature type="binding site" evidence="1">
    <location>
        <position position="113"/>
    </location>
    <ligand>
        <name>5-amino-6-(D-ribitylamino)uracil</name>
        <dbReference type="ChEBI" id="CHEBI:15934"/>
    </ligand>
</feature>
<feature type="binding site" evidence="1">
    <location>
        <position position="127"/>
    </location>
    <ligand>
        <name>(2S)-2-hydroxy-3-oxobutyl phosphate</name>
        <dbReference type="ChEBI" id="CHEBI:58830"/>
    </ligand>
</feature>
<gene>
    <name evidence="1" type="primary">ribH</name>
    <name type="ordered locus">Anae109_2728</name>
</gene>